<reference key="1">
    <citation type="journal article" date="2009" name="Appl. Environ. Microbiol.">
        <title>Novel features of the polysaccharide-digesting gliding bacterium Flavobacterium johnsoniae as revealed by genome sequence analysis.</title>
        <authorList>
            <person name="McBride M.J."/>
            <person name="Xie G."/>
            <person name="Martens E.C."/>
            <person name="Lapidus A."/>
            <person name="Henrissat B."/>
            <person name="Rhodes R.G."/>
            <person name="Goltsman E."/>
            <person name="Wang W."/>
            <person name="Xu J."/>
            <person name="Hunnicutt D.W."/>
            <person name="Staroscik A.M."/>
            <person name="Hoover T.R."/>
            <person name="Cheng Y.Q."/>
            <person name="Stein J.L."/>
        </authorList>
    </citation>
    <scope>NUCLEOTIDE SEQUENCE [LARGE SCALE GENOMIC DNA]</scope>
    <source>
        <strain>ATCC 17061 / DSM 2064 / JCM 8514 / BCRC 14874 / CCUG 350202 / NBRC 14942 / NCIMB 11054 / UW101</strain>
    </source>
</reference>
<comment type="function">
    <text evidence="1">Specifically dimethylates two adjacent adenosines (A1518 and A1519) in the loop of a conserved hairpin near the 3'-end of 16S rRNA in the 30S particle. May play a critical role in biogenesis of 30S subunits.</text>
</comment>
<comment type="catalytic activity">
    <reaction evidence="1">
        <text>adenosine(1518)/adenosine(1519) in 16S rRNA + 4 S-adenosyl-L-methionine = N(6)-dimethyladenosine(1518)/N(6)-dimethyladenosine(1519) in 16S rRNA + 4 S-adenosyl-L-homocysteine + 4 H(+)</text>
        <dbReference type="Rhea" id="RHEA:19609"/>
        <dbReference type="Rhea" id="RHEA-COMP:10232"/>
        <dbReference type="Rhea" id="RHEA-COMP:10233"/>
        <dbReference type="ChEBI" id="CHEBI:15378"/>
        <dbReference type="ChEBI" id="CHEBI:57856"/>
        <dbReference type="ChEBI" id="CHEBI:59789"/>
        <dbReference type="ChEBI" id="CHEBI:74411"/>
        <dbReference type="ChEBI" id="CHEBI:74493"/>
        <dbReference type="EC" id="2.1.1.182"/>
    </reaction>
</comment>
<comment type="subcellular location">
    <subcellularLocation>
        <location evidence="1">Cytoplasm</location>
    </subcellularLocation>
</comment>
<comment type="similarity">
    <text evidence="1">Belongs to the class I-like SAM-binding methyltransferase superfamily. rRNA adenine N(6)-methyltransferase family. RsmA subfamily.</text>
</comment>
<gene>
    <name evidence="1" type="primary">rsmA</name>
    <name evidence="1" type="synonym">ksgA</name>
    <name type="ordered locus">Fjoh_0844</name>
</gene>
<dbReference type="EC" id="2.1.1.182" evidence="1"/>
<dbReference type="EMBL" id="CP000685">
    <property type="protein sequence ID" value="ABQ03878.1"/>
    <property type="molecule type" value="Genomic_DNA"/>
</dbReference>
<dbReference type="RefSeq" id="WP_012022931.1">
    <property type="nucleotide sequence ID" value="NZ_MUGZ01000025.1"/>
</dbReference>
<dbReference type="SMR" id="A5FLP4"/>
<dbReference type="STRING" id="376686.Fjoh_0844"/>
<dbReference type="KEGG" id="fjo:Fjoh_0844"/>
<dbReference type="eggNOG" id="COG0030">
    <property type="taxonomic scope" value="Bacteria"/>
</dbReference>
<dbReference type="HOGENOM" id="CLU_041220_0_1_10"/>
<dbReference type="OrthoDB" id="9814755at2"/>
<dbReference type="Proteomes" id="UP000006694">
    <property type="component" value="Chromosome"/>
</dbReference>
<dbReference type="GO" id="GO:0005829">
    <property type="term" value="C:cytosol"/>
    <property type="evidence" value="ECO:0007669"/>
    <property type="project" value="TreeGrafter"/>
</dbReference>
<dbReference type="GO" id="GO:0052908">
    <property type="term" value="F:16S rRNA (adenine(1518)-N(6)/adenine(1519)-N(6))-dimethyltransferase activity"/>
    <property type="evidence" value="ECO:0007669"/>
    <property type="project" value="UniProtKB-EC"/>
</dbReference>
<dbReference type="GO" id="GO:0003723">
    <property type="term" value="F:RNA binding"/>
    <property type="evidence" value="ECO:0007669"/>
    <property type="project" value="UniProtKB-KW"/>
</dbReference>
<dbReference type="FunFam" id="1.10.8.100:FF:000001">
    <property type="entry name" value="Ribosomal RNA small subunit methyltransferase A"/>
    <property type="match status" value="1"/>
</dbReference>
<dbReference type="Gene3D" id="1.10.8.100">
    <property type="entry name" value="Ribosomal RNA adenine dimethylase-like, domain 2"/>
    <property type="match status" value="1"/>
</dbReference>
<dbReference type="Gene3D" id="3.40.50.150">
    <property type="entry name" value="Vaccinia Virus protein VP39"/>
    <property type="match status" value="1"/>
</dbReference>
<dbReference type="HAMAP" id="MF_00607">
    <property type="entry name" value="16SrRNA_methyltr_A"/>
    <property type="match status" value="1"/>
</dbReference>
<dbReference type="InterPro" id="IPR001737">
    <property type="entry name" value="KsgA/Erm"/>
</dbReference>
<dbReference type="InterPro" id="IPR023165">
    <property type="entry name" value="rRNA_Ade_diMease-like_C"/>
</dbReference>
<dbReference type="InterPro" id="IPR020598">
    <property type="entry name" value="rRNA_Ade_methylase_Trfase_N"/>
</dbReference>
<dbReference type="InterPro" id="IPR011530">
    <property type="entry name" value="rRNA_adenine_dimethylase"/>
</dbReference>
<dbReference type="InterPro" id="IPR029063">
    <property type="entry name" value="SAM-dependent_MTases_sf"/>
</dbReference>
<dbReference type="NCBIfam" id="TIGR00755">
    <property type="entry name" value="ksgA"/>
    <property type="match status" value="1"/>
</dbReference>
<dbReference type="PANTHER" id="PTHR11727">
    <property type="entry name" value="DIMETHYLADENOSINE TRANSFERASE"/>
    <property type="match status" value="1"/>
</dbReference>
<dbReference type="PANTHER" id="PTHR11727:SF7">
    <property type="entry name" value="DIMETHYLADENOSINE TRANSFERASE-RELATED"/>
    <property type="match status" value="1"/>
</dbReference>
<dbReference type="Pfam" id="PF00398">
    <property type="entry name" value="RrnaAD"/>
    <property type="match status" value="1"/>
</dbReference>
<dbReference type="SMART" id="SM00650">
    <property type="entry name" value="rADc"/>
    <property type="match status" value="1"/>
</dbReference>
<dbReference type="SUPFAM" id="SSF53335">
    <property type="entry name" value="S-adenosyl-L-methionine-dependent methyltransferases"/>
    <property type="match status" value="1"/>
</dbReference>
<dbReference type="PROSITE" id="PS51689">
    <property type="entry name" value="SAM_RNA_A_N6_MT"/>
    <property type="match status" value="1"/>
</dbReference>
<keyword id="KW-0963">Cytoplasm</keyword>
<keyword id="KW-0489">Methyltransferase</keyword>
<keyword id="KW-0694">RNA-binding</keyword>
<keyword id="KW-0698">rRNA processing</keyword>
<keyword id="KW-0949">S-adenosyl-L-methionine</keyword>
<keyword id="KW-0808">Transferase</keyword>
<proteinExistence type="inferred from homology"/>
<name>RSMA_FLAJ1</name>
<protein>
    <recommendedName>
        <fullName evidence="1">Ribosomal RNA small subunit methyltransferase A</fullName>
        <ecNumber evidence="1">2.1.1.182</ecNumber>
    </recommendedName>
    <alternativeName>
        <fullName evidence="1">16S rRNA (adenine(1518)-N(6)/adenine(1519)-N(6))-dimethyltransferase</fullName>
    </alternativeName>
    <alternativeName>
        <fullName evidence="1">16S rRNA dimethyladenosine transferase</fullName>
    </alternativeName>
    <alternativeName>
        <fullName evidence="1">16S rRNA dimethylase</fullName>
    </alternativeName>
    <alternativeName>
        <fullName evidence="1">S-adenosylmethionine-6-N', N'-adenosyl(rRNA) dimethyltransferase</fullName>
    </alternativeName>
</protein>
<accession>A5FLP4</accession>
<organism>
    <name type="scientific">Flavobacterium johnsoniae (strain ATCC 17061 / DSM 2064 / JCM 8514 / BCRC 14874 / CCUG 350202 / NBRC 14942 / NCIMB 11054 / UW101)</name>
    <name type="common">Cytophaga johnsonae</name>
    <dbReference type="NCBI Taxonomy" id="376686"/>
    <lineage>
        <taxon>Bacteria</taxon>
        <taxon>Pseudomonadati</taxon>
        <taxon>Bacteroidota</taxon>
        <taxon>Flavobacteriia</taxon>
        <taxon>Flavobacteriales</taxon>
        <taxon>Flavobacteriaceae</taxon>
        <taxon>Flavobacterium</taxon>
    </lineage>
</organism>
<evidence type="ECO:0000255" key="1">
    <source>
        <dbReference type="HAMAP-Rule" id="MF_00607"/>
    </source>
</evidence>
<sequence>MEKVKAKKHLGQHFLKDESIAKAIADTLSLKGYDEVLEIGPGMGVLTKYLLDKPVNTRVIEIDTESVEYLGVNYPKLKDKIISEDFLKYNINQVYENKQFAIIGNFPYNISSQIVFRTLEFRDQIPEFSGMFQKEVAERICEKKGSKTYGILSVLAQAFYDTEYLFTVSENVFIPPPKVKSGVMKMTRKEDYSLPCGEKLFFTVVKTAFQQRRKTLRNSLKTLNLSDKLREDIIFDKRPEQLSVEEFIVLTQKIEADGVQS</sequence>
<feature type="chain" id="PRO_1000082552" description="Ribosomal RNA small subunit methyltransferase A">
    <location>
        <begin position="1"/>
        <end position="261"/>
    </location>
</feature>
<feature type="binding site" evidence="1">
    <location>
        <position position="13"/>
    </location>
    <ligand>
        <name>S-adenosyl-L-methionine</name>
        <dbReference type="ChEBI" id="CHEBI:59789"/>
    </ligand>
</feature>
<feature type="binding site" evidence="1">
    <location>
        <position position="15"/>
    </location>
    <ligand>
        <name>S-adenosyl-L-methionine</name>
        <dbReference type="ChEBI" id="CHEBI:59789"/>
    </ligand>
</feature>
<feature type="binding site" evidence="1">
    <location>
        <position position="40"/>
    </location>
    <ligand>
        <name>S-adenosyl-L-methionine</name>
        <dbReference type="ChEBI" id="CHEBI:59789"/>
    </ligand>
</feature>
<feature type="binding site" evidence="1">
    <location>
        <position position="61"/>
    </location>
    <ligand>
        <name>S-adenosyl-L-methionine</name>
        <dbReference type="ChEBI" id="CHEBI:59789"/>
    </ligand>
</feature>
<feature type="binding site" evidence="1">
    <location>
        <position position="85"/>
    </location>
    <ligand>
        <name>S-adenosyl-L-methionine</name>
        <dbReference type="ChEBI" id="CHEBI:59789"/>
    </ligand>
</feature>
<feature type="binding site" evidence="1">
    <location>
        <position position="105"/>
    </location>
    <ligand>
        <name>S-adenosyl-L-methionine</name>
        <dbReference type="ChEBI" id="CHEBI:59789"/>
    </ligand>
</feature>